<evidence type="ECO:0000255" key="1">
    <source>
        <dbReference type="HAMAP-Rule" id="MF_00025"/>
    </source>
</evidence>
<reference key="1">
    <citation type="journal article" date="2009" name="BMC Genomics">
        <title>The complete genome sequence of Staphylothermus marinus reveals differences in sulfur metabolism among heterotrophic Crenarchaeota.</title>
        <authorList>
            <person name="Anderson I.J."/>
            <person name="Dharmarajan L."/>
            <person name="Rodriguez J."/>
            <person name="Hooper S."/>
            <person name="Porat I."/>
            <person name="Ulrich L.E."/>
            <person name="Elkins J.G."/>
            <person name="Mavromatis K."/>
            <person name="Sun H."/>
            <person name="Land M."/>
            <person name="Lapidus A."/>
            <person name="Lucas S."/>
            <person name="Barry K."/>
            <person name="Huber H."/>
            <person name="Zhulin I.B."/>
            <person name="Whitman W.B."/>
            <person name="Mukhopadhyay B."/>
            <person name="Woese C."/>
            <person name="Bristow J."/>
            <person name="Kyrpides N."/>
        </authorList>
    </citation>
    <scope>NUCLEOTIDE SEQUENCE [LARGE SCALE GENOMIC DNA]</scope>
    <source>
        <strain>ATCC 43588 / DSM 3639 / JCM 9404 / F1</strain>
    </source>
</reference>
<reference key="2">
    <citation type="journal article" date="2009" name="Stand. Genomic Sci.">
        <title>Complete genome sequence of Staphylothermus marinus Stetter and Fiala 1986 type strain F1.</title>
        <authorList>
            <person name="Anderson I.J."/>
            <person name="Sun H."/>
            <person name="Lapidus A."/>
            <person name="Copeland A."/>
            <person name="Glavina Del Rio T."/>
            <person name="Tice H."/>
            <person name="Dalin E."/>
            <person name="Lucas S."/>
            <person name="Barry K."/>
            <person name="Land M."/>
            <person name="Richardson P."/>
            <person name="Huber H."/>
            <person name="Kyrpides N.C."/>
        </authorList>
    </citation>
    <scope>NUCLEOTIDE SEQUENCE [LARGE SCALE GENOMIC DNA]</scope>
    <source>
        <strain>ATCC 43588 / DSM 3639 / JCM 9404 / F1</strain>
    </source>
</reference>
<keyword id="KW-0963">Cytoplasm</keyword>
<keyword id="KW-0240">DNA-directed RNA polymerase</keyword>
<keyword id="KW-0548">Nucleotidyltransferase</keyword>
<keyword id="KW-1185">Reference proteome</keyword>
<keyword id="KW-0804">Transcription</keyword>
<keyword id="KW-0808">Transferase</keyword>
<accession>A3DMP2</accession>
<protein>
    <recommendedName>
        <fullName evidence="1">DNA-directed RNA polymerase subunit Rpo5</fullName>
        <ecNumber evidence="1">2.7.7.6</ecNumber>
    </recommendedName>
    <alternativeName>
        <fullName evidence="1">DNA-directed RNA polymerase subunit H</fullName>
    </alternativeName>
</protein>
<comment type="function">
    <text evidence="1">DNA-dependent RNA polymerase (RNAP) catalyzes the transcription of DNA into RNA using the four ribonucleoside triphosphates as substrates.</text>
</comment>
<comment type="catalytic activity">
    <reaction evidence="1">
        <text>RNA(n) + a ribonucleoside 5'-triphosphate = RNA(n+1) + diphosphate</text>
        <dbReference type="Rhea" id="RHEA:21248"/>
        <dbReference type="Rhea" id="RHEA-COMP:14527"/>
        <dbReference type="Rhea" id="RHEA-COMP:17342"/>
        <dbReference type="ChEBI" id="CHEBI:33019"/>
        <dbReference type="ChEBI" id="CHEBI:61557"/>
        <dbReference type="ChEBI" id="CHEBI:140395"/>
        <dbReference type="EC" id="2.7.7.6"/>
    </reaction>
</comment>
<comment type="subunit">
    <text evidence="1">Part of the RNA polymerase complex.</text>
</comment>
<comment type="subcellular location">
    <subcellularLocation>
        <location evidence="1">Cytoplasm</location>
    </subcellularLocation>
</comment>
<comment type="similarity">
    <text evidence="1">Belongs to the archaeal Rpo5/eukaryotic RPB5 RNA polymerase subunit family.</text>
</comment>
<gene>
    <name evidence="1" type="primary">rpo5</name>
    <name evidence="1" type="synonym">rpoH</name>
    <name type="ordered locus">Smar_0801</name>
</gene>
<sequence length="91" mass="10397">MSRKKPNILEHELVPKHEVLSVREAAELLRKLKIKPAQLPWISIDDPVVKAIKAKPGDIIRIIRKSPTAGEAIAYRYVVVDTLRPRKKEKV</sequence>
<organism>
    <name type="scientific">Staphylothermus marinus (strain ATCC 43588 / DSM 3639 / JCM 9404 / F1)</name>
    <dbReference type="NCBI Taxonomy" id="399550"/>
    <lineage>
        <taxon>Archaea</taxon>
        <taxon>Thermoproteota</taxon>
        <taxon>Thermoprotei</taxon>
        <taxon>Desulfurococcales</taxon>
        <taxon>Desulfurococcaceae</taxon>
        <taxon>Staphylothermus</taxon>
    </lineage>
</organism>
<dbReference type="EC" id="2.7.7.6" evidence="1"/>
<dbReference type="EMBL" id="CP000575">
    <property type="protein sequence ID" value="ABN69902.1"/>
    <property type="molecule type" value="Genomic_DNA"/>
</dbReference>
<dbReference type="RefSeq" id="WP_011839093.1">
    <property type="nucleotide sequence ID" value="NC_009033.1"/>
</dbReference>
<dbReference type="SMR" id="A3DMP2"/>
<dbReference type="STRING" id="399550.Smar_0801"/>
<dbReference type="GeneID" id="4907103"/>
<dbReference type="KEGG" id="smr:Smar_0801"/>
<dbReference type="eggNOG" id="arCOG04258">
    <property type="taxonomic scope" value="Archaea"/>
</dbReference>
<dbReference type="HOGENOM" id="CLU_058320_4_0_2"/>
<dbReference type="OrthoDB" id="30537at2157"/>
<dbReference type="Proteomes" id="UP000000254">
    <property type="component" value="Chromosome"/>
</dbReference>
<dbReference type="GO" id="GO:0005737">
    <property type="term" value="C:cytoplasm"/>
    <property type="evidence" value="ECO:0007669"/>
    <property type="project" value="UniProtKB-SubCell"/>
</dbReference>
<dbReference type="GO" id="GO:0000428">
    <property type="term" value="C:DNA-directed RNA polymerase complex"/>
    <property type="evidence" value="ECO:0007669"/>
    <property type="project" value="UniProtKB-KW"/>
</dbReference>
<dbReference type="GO" id="GO:0003677">
    <property type="term" value="F:DNA binding"/>
    <property type="evidence" value="ECO:0007669"/>
    <property type="project" value="InterPro"/>
</dbReference>
<dbReference type="GO" id="GO:0003899">
    <property type="term" value="F:DNA-directed RNA polymerase activity"/>
    <property type="evidence" value="ECO:0007669"/>
    <property type="project" value="UniProtKB-UniRule"/>
</dbReference>
<dbReference type="GO" id="GO:0006366">
    <property type="term" value="P:transcription by RNA polymerase II"/>
    <property type="evidence" value="ECO:0007669"/>
    <property type="project" value="TreeGrafter"/>
</dbReference>
<dbReference type="GO" id="GO:0006362">
    <property type="term" value="P:transcription elongation by RNA polymerase I"/>
    <property type="evidence" value="ECO:0007669"/>
    <property type="project" value="TreeGrafter"/>
</dbReference>
<dbReference type="GO" id="GO:0042797">
    <property type="term" value="P:tRNA transcription by RNA polymerase III"/>
    <property type="evidence" value="ECO:0007669"/>
    <property type="project" value="TreeGrafter"/>
</dbReference>
<dbReference type="Gene3D" id="3.90.940.20">
    <property type="entry name" value="RPB5-like RNA polymerase subunit"/>
    <property type="match status" value="1"/>
</dbReference>
<dbReference type="HAMAP" id="MF_00025">
    <property type="entry name" value="RNApol_Rpo5_RPB5"/>
    <property type="match status" value="1"/>
</dbReference>
<dbReference type="InterPro" id="IPR014381">
    <property type="entry name" value="Arch_Rpo5/euc_Rpb5"/>
</dbReference>
<dbReference type="InterPro" id="IPR000783">
    <property type="entry name" value="RNA_pol_subH/Rpb5_C"/>
</dbReference>
<dbReference type="InterPro" id="IPR035913">
    <property type="entry name" value="RPB5-like_sf"/>
</dbReference>
<dbReference type="NCBIfam" id="NF007129">
    <property type="entry name" value="PRK09570.1"/>
    <property type="match status" value="1"/>
</dbReference>
<dbReference type="PANTHER" id="PTHR10535">
    <property type="entry name" value="DNA-DIRECTED RNA POLYMERASES I, II, AND III SUBUNIT RPABC1"/>
    <property type="match status" value="1"/>
</dbReference>
<dbReference type="PANTHER" id="PTHR10535:SF0">
    <property type="entry name" value="DNA-DIRECTED RNA POLYMERASES I, II, AND III SUBUNIT RPABC1"/>
    <property type="match status" value="1"/>
</dbReference>
<dbReference type="Pfam" id="PF01191">
    <property type="entry name" value="RNA_pol_Rpb5_C"/>
    <property type="match status" value="1"/>
</dbReference>
<dbReference type="SUPFAM" id="SSF55287">
    <property type="entry name" value="RPB5-like RNA polymerase subunit"/>
    <property type="match status" value="1"/>
</dbReference>
<name>RPO5_STAMF</name>
<proteinExistence type="inferred from homology"/>
<feature type="chain" id="PRO_1000074387" description="DNA-directed RNA polymerase subunit Rpo5">
    <location>
        <begin position="1"/>
        <end position="91"/>
    </location>
</feature>